<organism>
    <name type="scientific">Symbiobacterium thermophilum (strain DSM 24528 / JCM 14929 / IAM 14863 / T)</name>
    <dbReference type="NCBI Taxonomy" id="292459"/>
    <lineage>
        <taxon>Bacteria</taxon>
        <taxon>Bacillati</taxon>
        <taxon>Bacillota</taxon>
        <taxon>Clostridia</taxon>
        <taxon>Eubacteriales</taxon>
        <taxon>Symbiobacteriaceae</taxon>
        <taxon>Symbiobacterium</taxon>
    </lineage>
</organism>
<protein>
    <recommendedName>
        <fullName evidence="1">Sugar fermentation stimulation protein homolog</fullName>
    </recommendedName>
</protein>
<reference key="1">
    <citation type="journal article" date="2004" name="Nucleic Acids Res.">
        <title>Genome sequence of Symbiobacterium thermophilum, an uncultivable bacterium that depends on microbial commensalism.</title>
        <authorList>
            <person name="Ueda K."/>
            <person name="Yamashita A."/>
            <person name="Ishikawa J."/>
            <person name="Shimada M."/>
            <person name="Watsuji T."/>
            <person name="Morimura K."/>
            <person name="Ikeda H."/>
            <person name="Hattori M."/>
            <person name="Beppu T."/>
        </authorList>
    </citation>
    <scope>NUCLEOTIDE SEQUENCE [LARGE SCALE GENOMIC DNA]</scope>
    <source>
        <strain>DSM 24528 / JCM 14929 / IAM 14863 / T</strain>
    </source>
</reference>
<dbReference type="EMBL" id="AP006840">
    <property type="protein sequence ID" value="BAD39934.1"/>
    <property type="molecule type" value="Genomic_DNA"/>
</dbReference>
<dbReference type="SMR" id="Q67QV9"/>
<dbReference type="STRING" id="292459.STH949"/>
<dbReference type="KEGG" id="sth:STH949"/>
<dbReference type="eggNOG" id="COG1489">
    <property type="taxonomic scope" value="Bacteria"/>
</dbReference>
<dbReference type="HOGENOM" id="CLU_052299_1_0_9"/>
<dbReference type="Proteomes" id="UP000000417">
    <property type="component" value="Chromosome"/>
</dbReference>
<dbReference type="GO" id="GO:0003677">
    <property type="term" value="F:DNA binding"/>
    <property type="evidence" value="ECO:0007669"/>
    <property type="project" value="InterPro"/>
</dbReference>
<dbReference type="CDD" id="cd22359">
    <property type="entry name" value="SfsA-like_bacterial"/>
    <property type="match status" value="1"/>
</dbReference>
<dbReference type="Gene3D" id="2.40.50.580">
    <property type="match status" value="1"/>
</dbReference>
<dbReference type="Gene3D" id="3.40.1350.60">
    <property type="match status" value="1"/>
</dbReference>
<dbReference type="HAMAP" id="MF_00095">
    <property type="entry name" value="SfsA"/>
    <property type="match status" value="1"/>
</dbReference>
<dbReference type="InterPro" id="IPR005224">
    <property type="entry name" value="SfsA"/>
</dbReference>
<dbReference type="InterPro" id="IPR040452">
    <property type="entry name" value="SfsA_C"/>
</dbReference>
<dbReference type="InterPro" id="IPR041465">
    <property type="entry name" value="SfsA_N"/>
</dbReference>
<dbReference type="NCBIfam" id="TIGR00230">
    <property type="entry name" value="sfsA"/>
    <property type="match status" value="1"/>
</dbReference>
<dbReference type="PANTHER" id="PTHR30545">
    <property type="entry name" value="SUGAR FERMENTATION STIMULATION PROTEIN A"/>
    <property type="match status" value="1"/>
</dbReference>
<dbReference type="PANTHER" id="PTHR30545:SF2">
    <property type="entry name" value="SUGAR FERMENTATION STIMULATION PROTEIN A"/>
    <property type="match status" value="1"/>
</dbReference>
<dbReference type="Pfam" id="PF03749">
    <property type="entry name" value="SfsA"/>
    <property type="match status" value="1"/>
</dbReference>
<dbReference type="Pfam" id="PF17746">
    <property type="entry name" value="SfsA_N"/>
    <property type="match status" value="1"/>
</dbReference>
<keyword id="KW-1185">Reference proteome</keyword>
<gene>
    <name evidence="1" type="primary">sfsA</name>
    <name type="ordered locus">STH949</name>
</gene>
<sequence>MKGAEPLAELRLRATFLERPNRFVARVRLEDGREVPVHVASSGRMKELLVPGAPVIVTLQGDASAQPTRPFGGRKTAGRLLMVRTGSTWVSVDTSLPGKLFHQAVVAGSCAPFAGYTEVRPEYRYGGSRIDFLLTAPDLPPCLVEVKSVTSVLPDADGARVARFPDAPTARGARHLDELAGAVREGYRAAVCFITQRDDAQAFGPWDEIDPFFGETLRKVARAGVEIRAFVTHVTPEGAVLGGELPVRLAR</sequence>
<name>SFSA_SYMTH</name>
<comment type="similarity">
    <text evidence="1">Belongs to the SfsA family.</text>
</comment>
<accession>Q67QV9</accession>
<evidence type="ECO:0000255" key="1">
    <source>
        <dbReference type="HAMAP-Rule" id="MF_00095"/>
    </source>
</evidence>
<proteinExistence type="inferred from homology"/>
<feature type="chain" id="PRO_0000152308" description="Sugar fermentation stimulation protein homolog">
    <location>
        <begin position="1"/>
        <end position="251"/>
    </location>
</feature>